<reference key="1">
    <citation type="journal article" date="2006" name="PLoS Genet.">
        <title>The complete genome sequence and comparative genome analysis of the high pathogenicity Yersinia enterocolitica strain 8081.</title>
        <authorList>
            <person name="Thomson N.R."/>
            <person name="Howard S."/>
            <person name="Wren B.W."/>
            <person name="Holden M.T.G."/>
            <person name="Crossman L."/>
            <person name="Challis G.L."/>
            <person name="Churcher C."/>
            <person name="Mungall K."/>
            <person name="Brooks K."/>
            <person name="Chillingworth T."/>
            <person name="Feltwell T."/>
            <person name="Abdellah Z."/>
            <person name="Hauser H."/>
            <person name="Jagels K."/>
            <person name="Maddison M."/>
            <person name="Moule S."/>
            <person name="Sanders M."/>
            <person name="Whitehead S."/>
            <person name="Quail M.A."/>
            <person name="Dougan G."/>
            <person name="Parkhill J."/>
            <person name="Prentice M.B."/>
        </authorList>
    </citation>
    <scope>NUCLEOTIDE SEQUENCE [LARGE SCALE GENOMIC DNA]</scope>
    <source>
        <strain>NCTC 13174 / 8081</strain>
    </source>
</reference>
<keyword id="KW-0067">ATP-binding</keyword>
<keyword id="KW-0238">DNA-binding</keyword>
<keyword id="KW-0479">Metal-binding</keyword>
<keyword id="KW-0547">Nucleotide-binding</keyword>
<keyword id="KW-0678">Repressor</keyword>
<keyword id="KW-0804">Transcription</keyword>
<keyword id="KW-0805">Transcription regulation</keyword>
<keyword id="KW-0862">Zinc</keyword>
<keyword id="KW-0863">Zinc-finger</keyword>
<evidence type="ECO:0000255" key="1">
    <source>
        <dbReference type="HAMAP-Rule" id="MF_00440"/>
    </source>
</evidence>
<dbReference type="EMBL" id="AM286415">
    <property type="protein sequence ID" value="CAL13196.1"/>
    <property type="molecule type" value="Genomic_DNA"/>
</dbReference>
<dbReference type="RefSeq" id="WP_004716459.1">
    <property type="nucleotide sequence ID" value="NC_008800.1"/>
</dbReference>
<dbReference type="RefSeq" id="YP_001007343.1">
    <property type="nucleotide sequence ID" value="NC_008800.1"/>
</dbReference>
<dbReference type="SMR" id="A1JNS5"/>
<dbReference type="GeneID" id="97457298"/>
<dbReference type="KEGG" id="yen:YE3162"/>
<dbReference type="PATRIC" id="fig|393305.7.peg.3363"/>
<dbReference type="eggNOG" id="COG1327">
    <property type="taxonomic scope" value="Bacteria"/>
</dbReference>
<dbReference type="HOGENOM" id="CLU_108412_0_0_6"/>
<dbReference type="OrthoDB" id="9807461at2"/>
<dbReference type="Proteomes" id="UP000000642">
    <property type="component" value="Chromosome"/>
</dbReference>
<dbReference type="GO" id="GO:0005524">
    <property type="term" value="F:ATP binding"/>
    <property type="evidence" value="ECO:0007669"/>
    <property type="project" value="UniProtKB-KW"/>
</dbReference>
<dbReference type="GO" id="GO:0003677">
    <property type="term" value="F:DNA binding"/>
    <property type="evidence" value="ECO:0007669"/>
    <property type="project" value="UniProtKB-KW"/>
</dbReference>
<dbReference type="GO" id="GO:0008270">
    <property type="term" value="F:zinc ion binding"/>
    <property type="evidence" value="ECO:0007669"/>
    <property type="project" value="UniProtKB-UniRule"/>
</dbReference>
<dbReference type="GO" id="GO:0045892">
    <property type="term" value="P:negative regulation of DNA-templated transcription"/>
    <property type="evidence" value="ECO:0007669"/>
    <property type="project" value="UniProtKB-UniRule"/>
</dbReference>
<dbReference type="HAMAP" id="MF_00440">
    <property type="entry name" value="NrdR"/>
    <property type="match status" value="1"/>
</dbReference>
<dbReference type="InterPro" id="IPR005144">
    <property type="entry name" value="ATP-cone_dom"/>
</dbReference>
<dbReference type="InterPro" id="IPR055173">
    <property type="entry name" value="NrdR-like_N"/>
</dbReference>
<dbReference type="InterPro" id="IPR003796">
    <property type="entry name" value="RNR_NrdR-like"/>
</dbReference>
<dbReference type="NCBIfam" id="TIGR00244">
    <property type="entry name" value="transcriptional regulator NrdR"/>
    <property type="match status" value="1"/>
</dbReference>
<dbReference type="PANTHER" id="PTHR30455">
    <property type="entry name" value="TRANSCRIPTIONAL REPRESSOR NRDR"/>
    <property type="match status" value="1"/>
</dbReference>
<dbReference type="PANTHER" id="PTHR30455:SF2">
    <property type="entry name" value="TRANSCRIPTIONAL REPRESSOR NRDR"/>
    <property type="match status" value="1"/>
</dbReference>
<dbReference type="Pfam" id="PF03477">
    <property type="entry name" value="ATP-cone"/>
    <property type="match status" value="1"/>
</dbReference>
<dbReference type="Pfam" id="PF22811">
    <property type="entry name" value="Zn_ribbon_NrdR"/>
    <property type="match status" value="1"/>
</dbReference>
<dbReference type="PROSITE" id="PS51161">
    <property type="entry name" value="ATP_CONE"/>
    <property type="match status" value="1"/>
</dbReference>
<protein>
    <recommendedName>
        <fullName evidence="1">Transcriptional repressor NrdR</fullName>
    </recommendedName>
</protein>
<accession>A1JNS5</accession>
<organism>
    <name type="scientific">Yersinia enterocolitica serotype O:8 / biotype 1B (strain NCTC 13174 / 8081)</name>
    <dbReference type="NCBI Taxonomy" id="393305"/>
    <lineage>
        <taxon>Bacteria</taxon>
        <taxon>Pseudomonadati</taxon>
        <taxon>Pseudomonadota</taxon>
        <taxon>Gammaproteobacteria</taxon>
        <taxon>Enterobacterales</taxon>
        <taxon>Yersiniaceae</taxon>
        <taxon>Yersinia</taxon>
    </lineage>
</organism>
<comment type="function">
    <text evidence="1">Negatively regulates transcription of bacterial ribonucleotide reductase nrd genes and operons by binding to NrdR-boxes.</text>
</comment>
<comment type="cofactor">
    <cofactor evidence="1">
        <name>Zn(2+)</name>
        <dbReference type="ChEBI" id="CHEBI:29105"/>
    </cofactor>
    <text evidence="1">Binds 1 zinc ion.</text>
</comment>
<comment type="similarity">
    <text evidence="1">Belongs to the NrdR family.</text>
</comment>
<gene>
    <name evidence="1" type="primary">nrdR</name>
    <name type="ordered locus">YE3162</name>
</gene>
<feature type="chain" id="PRO_1000080855" description="Transcriptional repressor NrdR">
    <location>
        <begin position="1"/>
        <end position="149"/>
    </location>
</feature>
<feature type="domain" description="ATP-cone" evidence="1">
    <location>
        <begin position="49"/>
        <end position="139"/>
    </location>
</feature>
<feature type="zinc finger region" evidence="1">
    <location>
        <begin position="3"/>
        <end position="34"/>
    </location>
</feature>
<sequence length="149" mass="17205">MHCPFCAAVDTKVIDSRLVSDGSQVRRRRQCLDCNERFTTFEVAELVLPRVIKSDDVREPFNEEKLRRGMLKALEKRPVSSDDVETAISHIKSQLRATGEREVPTKMVGNLVMEALKRLDKVAYIRFASVYRSFEDIREFGEEIARLQD</sequence>
<proteinExistence type="inferred from homology"/>
<name>NRDR_YERE8</name>